<name>ROX1_YEAST</name>
<evidence type="ECO:0000255" key="1">
    <source>
        <dbReference type="PROSITE-ProRule" id="PRU00267"/>
    </source>
</evidence>
<evidence type="ECO:0000256" key="2">
    <source>
        <dbReference type="SAM" id="MobiDB-lite"/>
    </source>
</evidence>
<evidence type="ECO:0000269" key="3">
    <source>
    </source>
</evidence>
<gene>
    <name type="primary">ROX1</name>
    <name type="ordered locus">YPR065W</name>
    <name type="ORF">YP9499.20</name>
</gene>
<feature type="chain" id="PRO_0000048574" description="Repressor ROX1">
    <location>
        <begin position="1"/>
        <end position="368"/>
    </location>
</feature>
<feature type="DNA-binding region" description="HMG box" evidence="1">
    <location>
        <begin position="10"/>
        <end position="83"/>
    </location>
</feature>
<feature type="region of interest" description="Disordered" evidence="2">
    <location>
        <begin position="100"/>
        <end position="121"/>
    </location>
</feature>
<feature type="region of interest" description="Disordered" evidence="2">
    <location>
        <begin position="242"/>
        <end position="273"/>
    </location>
</feature>
<feature type="compositionally biased region" description="Low complexity" evidence="2">
    <location>
        <begin position="102"/>
        <end position="121"/>
    </location>
</feature>
<protein>
    <recommendedName>
        <fullName>Repressor ROX1</fullName>
    </recommendedName>
    <alternativeName>
        <fullName>Heme-dependent repression factor</fullName>
    </alternativeName>
    <alternativeName>
        <fullName>Hypoxic function repressor</fullName>
    </alternativeName>
</protein>
<comment type="function">
    <text>Transcription factor that represses the expression of HEM13, COX5B, ANB1, CYC7 or AAC3 (hypoxic function). Binds to the DNA sequence 5'-RRRTAACAAGAG-3'.</text>
</comment>
<comment type="subcellular location">
    <subcellularLocation>
        <location>Nucleus</location>
    </subcellularLocation>
</comment>
<comment type="induction">
    <text>By heme.</text>
</comment>
<comment type="miscellaneous">
    <text evidence="3">Present with 238 molecules/cell in log phase SD medium.</text>
</comment>
<organism>
    <name type="scientific">Saccharomyces cerevisiae (strain ATCC 204508 / S288c)</name>
    <name type="common">Baker's yeast</name>
    <dbReference type="NCBI Taxonomy" id="559292"/>
    <lineage>
        <taxon>Eukaryota</taxon>
        <taxon>Fungi</taxon>
        <taxon>Dikarya</taxon>
        <taxon>Ascomycota</taxon>
        <taxon>Saccharomycotina</taxon>
        <taxon>Saccharomycetes</taxon>
        <taxon>Saccharomycetales</taxon>
        <taxon>Saccharomycetaceae</taxon>
        <taxon>Saccharomyces</taxon>
    </lineage>
</organism>
<reference key="1">
    <citation type="journal article" date="1993" name="Mol. Cell. Biol.">
        <title>The Rox1 repressor of the Saccharomyces cerevisiae hypoxic genes is a specific DNA-binding protein with a high-mobility-group motif.</title>
        <authorList>
            <person name="Balasubramanian B."/>
            <person name="Lowry C.V."/>
            <person name="Zitomer R.S."/>
        </authorList>
    </citation>
    <scope>NUCLEOTIDE SEQUENCE [GENOMIC DNA]</scope>
</reference>
<reference key="2">
    <citation type="journal article" date="1997" name="Nature">
        <title>The nucleotide sequence of Saccharomyces cerevisiae chromosome XVI.</title>
        <authorList>
            <person name="Bussey H."/>
            <person name="Storms R.K."/>
            <person name="Ahmed A."/>
            <person name="Albermann K."/>
            <person name="Allen E."/>
            <person name="Ansorge W."/>
            <person name="Araujo R."/>
            <person name="Aparicio A."/>
            <person name="Barrell B.G."/>
            <person name="Badcock K."/>
            <person name="Benes V."/>
            <person name="Botstein D."/>
            <person name="Bowman S."/>
            <person name="Brueckner M."/>
            <person name="Carpenter J."/>
            <person name="Cherry J.M."/>
            <person name="Chung E."/>
            <person name="Churcher C.M."/>
            <person name="Coster F."/>
            <person name="Davis K."/>
            <person name="Davis R.W."/>
            <person name="Dietrich F.S."/>
            <person name="Delius H."/>
            <person name="DiPaolo T."/>
            <person name="Dubois E."/>
            <person name="Duesterhoeft A."/>
            <person name="Duncan M."/>
            <person name="Floeth M."/>
            <person name="Fortin N."/>
            <person name="Friesen J.D."/>
            <person name="Fritz C."/>
            <person name="Goffeau A."/>
            <person name="Hall J."/>
            <person name="Hebling U."/>
            <person name="Heumann K."/>
            <person name="Hilbert H."/>
            <person name="Hillier L.W."/>
            <person name="Hunicke-Smith S."/>
            <person name="Hyman R.W."/>
            <person name="Johnston M."/>
            <person name="Kalman S."/>
            <person name="Kleine K."/>
            <person name="Komp C."/>
            <person name="Kurdi O."/>
            <person name="Lashkari D."/>
            <person name="Lew H."/>
            <person name="Lin A."/>
            <person name="Lin D."/>
            <person name="Louis E.J."/>
            <person name="Marathe R."/>
            <person name="Messenguy F."/>
            <person name="Mewes H.-W."/>
            <person name="Mirtipati S."/>
            <person name="Moestl D."/>
            <person name="Mueller-Auer S."/>
            <person name="Namath A."/>
            <person name="Nentwich U."/>
            <person name="Oefner P."/>
            <person name="Pearson D."/>
            <person name="Petel F.X."/>
            <person name="Pohl T.M."/>
            <person name="Purnelle B."/>
            <person name="Rajandream M.A."/>
            <person name="Rechmann S."/>
            <person name="Rieger M."/>
            <person name="Riles L."/>
            <person name="Roberts D."/>
            <person name="Schaefer M."/>
            <person name="Scharfe M."/>
            <person name="Scherens B."/>
            <person name="Schramm S."/>
            <person name="Schroeder M."/>
            <person name="Sdicu A.-M."/>
            <person name="Tettelin H."/>
            <person name="Urrestarazu L.A."/>
            <person name="Ushinsky S."/>
            <person name="Vierendeels F."/>
            <person name="Vissers S."/>
            <person name="Voss H."/>
            <person name="Walsh S.V."/>
            <person name="Wambutt R."/>
            <person name="Wang Y."/>
            <person name="Wedler E."/>
            <person name="Wedler H."/>
            <person name="Winnett E."/>
            <person name="Zhong W.-W."/>
            <person name="Zollner A."/>
            <person name="Vo D.H."/>
            <person name="Hani J."/>
        </authorList>
    </citation>
    <scope>NUCLEOTIDE SEQUENCE [LARGE SCALE GENOMIC DNA]</scope>
    <source>
        <strain>ATCC 204508 / S288c</strain>
    </source>
</reference>
<reference key="3">
    <citation type="journal article" date="2014" name="G3 (Bethesda)">
        <title>The reference genome sequence of Saccharomyces cerevisiae: Then and now.</title>
        <authorList>
            <person name="Engel S.R."/>
            <person name="Dietrich F.S."/>
            <person name="Fisk D.G."/>
            <person name="Binkley G."/>
            <person name="Balakrishnan R."/>
            <person name="Costanzo M.C."/>
            <person name="Dwight S.S."/>
            <person name="Hitz B.C."/>
            <person name="Karra K."/>
            <person name="Nash R.S."/>
            <person name="Weng S."/>
            <person name="Wong E.D."/>
            <person name="Lloyd P."/>
            <person name="Skrzypek M.S."/>
            <person name="Miyasato S.R."/>
            <person name="Simison M."/>
            <person name="Cherry J.M."/>
        </authorList>
    </citation>
    <scope>GENOME REANNOTATION</scope>
    <source>
        <strain>ATCC 204508 / S288c</strain>
    </source>
</reference>
<reference key="4">
    <citation type="journal article" date="1996" name="Nucleic Acids Res.">
        <title>The HMG domain of the ROX1 protein mediates repression of HEM13 through overlapping DNA binding and oligomerization functions.</title>
        <authorList>
            <person name="di Flumeri C."/>
            <person name="Liston P."/>
            <person name="Acheson N.H."/>
            <person name="Keng T."/>
        </authorList>
    </citation>
    <scope>CHARACTERIZATION</scope>
</reference>
<reference key="5">
    <citation type="journal article" date="2003" name="Nature">
        <title>Global analysis of protein expression in yeast.</title>
        <authorList>
            <person name="Ghaemmaghami S."/>
            <person name="Huh W.-K."/>
            <person name="Bower K."/>
            <person name="Howson R.W."/>
            <person name="Belle A."/>
            <person name="Dephoure N."/>
            <person name="O'Shea E.K."/>
            <person name="Weissman J.S."/>
        </authorList>
    </citation>
    <scope>LEVEL OF PROTEIN EXPRESSION [LARGE SCALE ANALYSIS]</scope>
</reference>
<reference key="6">
    <citation type="journal article" date="2008" name="Mol. Cell. Proteomics">
        <title>A multidimensional chromatography technology for in-depth phosphoproteome analysis.</title>
        <authorList>
            <person name="Albuquerque C.P."/>
            <person name="Smolka M.B."/>
            <person name="Payne S.H."/>
            <person name="Bafna V."/>
            <person name="Eng J."/>
            <person name="Zhou H."/>
        </authorList>
    </citation>
    <scope>IDENTIFICATION BY MASS SPECTROMETRY [LARGE SCALE ANALYSIS]</scope>
</reference>
<reference key="7">
    <citation type="journal article" date="2009" name="Science">
        <title>Global analysis of Cdk1 substrate phosphorylation sites provides insights into evolution.</title>
        <authorList>
            <person name="Holt L.J."/>
            <person name="Tuch B.B."/>
            <person name="Villen J."/>
            <person name="Johnson A.D."/>
            <person name="Gygi S.P."/>
            <person name="Morgan D.O."/>
        </authorList>
    </citation>
    <scope>IDENTIFICATION BY MASS SPECTROMETRY [LARGE SCALE ANALYSIS]</scope>
</reference>
<proteinExistence type="evidence at protein level"/>
<dbReference type="EMBL" id="X60458">
    <property type="protein sequence ID" value="CAA42991.1"/>
    <property type="molecule type" value="Genomic_DNA"/>
</dbReference>
<dbReference type="EMBL" id="Z49219">
    <property type="protein sequence ID" value="CAA89182.1"/>
    <property type="molecule type" value="Genomic_DNA"/>
</dbReference>
<dbReference type="EMBL" id="Z71255">
    <property type="protein sequence ID" value="CAA94973.1"/>
    <property type="molecule type" value="Genomic_DNA"/>
</dbReference>
<dbReference type="EMBL" id="BK006949">
    <property type="protein sequence ID" value="DAA11485.1"/>
    <property type="molecule type" value="Genomic_DNA"/>
</dbReference>
<dbReference type="PIR" id="A54430">
    <property type="entry name" value="A54430"/>
</dbReference>
<dbReference type="RefSeq" id="NP_015390.1">
    <property type="nucleotide sequence ID" value="NM_001184162.1"/>
</dbReference>
<dbReference type="SMR" id="P25042"/>
<dbReference type="BioGRID" id="36237">
    <property type="interactions" value="219"/>
</dbReference>
<dbReference type="DIP" id="DIP-4651N"/>
<dbReference type="FunCoup" id="P25042">
    <property type="interactions" value="1111"/>
</dbReference>
<dbReference type="IntAct" id="P25042">
    <property type="interactions" value="10"/>
</dbReference>
<dbReference type="MINT" id="P25042"/>
<dbReference type="STRING" id="4932.YPR065W"/>
<dbReference type="iPTMnet" id="P25042"/>
<dbReference type="PaxDb" id="4932-YPR065W"/>
<dbReference type="PeptideAtlas" id="P25042"/>
<dbReference type="EnsemblFungi" id="YPR065W_mRNA">
    <property type="protein sequence ID" value="YPR065W"/>
    <property type="gene ID" value="YPR065W"/>
</dbReference>
<dbReference type="GeneID" id="856178"/>
<dbReference type="KEGG" id="sce:YPR065W"/>
<dbReference type="AGR" id="SGD:S000006269"/>
<dbReference type="SGD" id="S000006269">
    <property type="gene designation" value="ROX1"/>
</dbReference>
<dbReference type="VEuPathDB" id="FungiDB:YPR065W"/>
<dbReference type="eggNOG" id="KOG0527">
    <property type="taxonomic scope" value="Eukaryota"/>
</dbReference>
<dbReference type="HOGENOM" id="CLU_752616_0_0_1"/>
<dbReference type="InParanoid" id="P25042"/>
<dbReference type="OMA" id="ILIDEWT"/>
<dbReference type="OrthoDB" id="6247875at2759"/>
<dbReference type="BioCyc" id="YEAST:G3O-34213-MONOMER"/>
<dbReference type="BioGRID-ORCS" id="856178">
    <property type="hits" value="4 hits in 13 CRISPR screens"/>
</dbReference>
<dbReference type="PRO" id="PR:P25042"/>
<dbReference type="Proteomes" id="UP000002311">
    <property type="component" value="Chromosome XVI"/>
</dbReference>
<dbReference type="RNAct" id="P25042">
    <property type="molecule type" value="protein"/>
</dbReference>
<dbReference type="GO" id="GO:0000785">
    <property type="term" value="C:chromatin"/>
    <property type="evidence" value="ECO:0000305"/>
    <property type="project" value="SGD"/>
</dbReference>
<dbReference type="GO" id="GO:0005634">
    <property type="term" value="C:nucleus"/>
    <property type="evidence" value="ECO:0000318"/>
    <property type="project" value="GO_Central"/>
</dbReference>
<dbReference type="GO" id="GO:0000987">
    <property type="term" value="F:cis-regulatory region sequence-specific DNA binding"/>
    <property type="evidence" value="ECO:0000314"/>
    <property type="project" value="SGD"/>
</dbReference>
<dbReference type="GO" id="GO:0008301">
    <property type="term" value="F:DNA binding, bending"/>
    <property type="evidence" value="ECO:0000314"/>
    <property type="project" value="SGD"/>
</dbReference>
<dbReference type="GO" id="GO:0001228">
    <property type="term" value="F:DNA-binding transcription activator activity, RNA polymerase II-specific"/>
    <property type="evidence" value="ECO:0000318"/>
    <property type="project" value="GO_Central"/>
</dbReference>
<dbReference type="GO" id="GO:0001227">
    <property type="term" value="F:DNA-binding transcription repressor activity, RNA polymerase II-specific"/>
    <property type="evidence" value="ECO:0000315"/>
    <property type="project" value="SGD"/>
</dbReference>
<dbReference type="GO" id="GO:0000978">
    <property type="term" value="F:RNA polymerase II cis-regulatory region sequence-specific DNA binding"/>
    <property type="evidence" value="ECO:0000318"/>
    <property type="project" value="GO_Central"/>
</dbReference>
<dbReference type="GO" id="GO:0043565">
    <property type="term" value="F:sequence-specific DNA binding"/>
    <property type="evidence" value="ECO:0000314"/>
    <property type="project" value="SGD"/>
</dbReference>
<dbReference type="GO" id="GO:0003714">
    <property type="term" value="F:transcription corepressor activity"/>
    <property type="evidence" value="ECO:0000315"/>
    <property type="project" value="SGD"/>
</dbReference>
<dbReference type="GO" id="GO:0030154">
    <property type="term" value="P:cell differentiation"/>
    <property type="evidence" value="ECO:0000318"/>
    <property type="project" value="GO_Central"/>
</dbReference>
<dbReference type="GO" id="GO:0036295">
    <property type="term" value="P:cellular response to increased oxygen levels"/>
    <property type="evidence" value="ECO:0000315"/>
    <property type="project" value="SGD"/>
</dbReference>
<dbReference type="GO" id="GO:0071470">
    <property type="term" value="P:cellular response to osmotic stress"/>
    <property type="evidence" value="ECO:0000315"/>
    <property type="project" value="SGD"/>
</dbReference>
<dbReference type="GO" id="GO:0071472">
    <property type="term" value="P:cellular response to salt stress"/>
    <property type="evidence" value="ECO:0000315"/>
    <property type="project" value="SGD"/>
</dbReference>
<dbReference type="GO" id="GO:0000122">
    <property type="term" value="P:negative regulation of transcription by RNA polymerase II"/>
    <property type="evidence" value="ECO:0000315"/>
    <property type="project" value="SGD"/>
</dbReference>
<dbReference type="GO" id="GO:0045944">
    <property type="term" value="P:positive regulation of transcription by RNA polymerase II"/>
    <property type="evidence" value="ECO:0000318"/>
    <property type="project" value="GO_Central"/>
</dbReference>
<dbReference type="CDD" id="cd01389">
    <property type="entry name" value="HMG-box_ROX1-like"/>
    <property type="match status" value="1"/>
</dbReference>
<dbReference type="FunFam" id="1.10.30.10:FF:000041">
    <property type="entry name" value="HMG box family protein"/>
    <property type="match status" value="1"/>
</dbReference>
<dbReference type="Gene3D" id="1.10.30.10">
    <property type="entry name" value="High mobility group box domain"/>
    <property type="match status" value="1"/>
</dbReference>
<dbReference type="InterPro" id="IPR009071">
    <property type="entry name" value="HMG_box_dom"/>
</dbReference>
<dbReference type="InterPro" id="IPR036910">
    <property type="entry name" value="HMG_box_dom_sf"/>
</dbReference>
<dbReference type="InterPro" id="IPR050140">
    <property type="entry name" value="SRY-related_HMG-box_TF-like"/>
</dbReference>
<dbReference type="PANTHER" id="PTHR10270:SF161">
    <property type="entry name" value="SEX-DETERMINING REGION Y PROTEIN"/>
    <property type="match status" value="1"/>
</dbReference>
<dbReference type="PANTHER" id="PTHR10270">
    <property type="entry name" value="SOX TRANSCRIPTION FACTOR"/>
    <property type="match status" value="1"/>
</dbReference>
<dbReference type="Pfam" id="PF00505">
    <property type="entry name" value="HMG_box"/>
    <property type="match status" value="1"/>
</dbReference>
<dbReference type="SMART" id="SM00398">
    <property type="entry name" value="HMG"/>
    <property type="match status" value="1"/>
</dbReference>
<dbReference type="SUPFAM" id="SSF47095">
    <property type="entry name" value="HMG-box"/>
    <property type="match status" value="1"/>
</dbReference>
<dbReference type="PROSITE" id="PS50118">
    <property type="entry name" value="HMG_BOX_2"/>
    <property type="match status" value="1"/>
</dbReference>
<accession>P25042</accession>
<accession>D6W469</accession>
<keyword id="KW-0238">DNA-binding</keyword>
<keyword id="KW-0539">Nucleus</keyword>
<keyword id="KW-1185">Reference proteome</keyword>
<keyword id="KW-0678">Repressor</keyword>
<keyword id="KW-0804">Transcription</keyword>
<keyword id="KW-0805">Transcription regulation</keyword>
<sequence length="368" mass="41838">MNPKSSTPKIPRPKNAFILFRQHYHRILIDEWTAQGVEIPHNSNISKIIGTKWKGLQPEDKAHWENLAEKEKLEHERKYPEYKYKPVRKSKKKQLLLKEIEQQQQQQQKEQQQQKQSQPQLQQPFNNNIVLMKRAHSLSPSSSVSSSNSYQFQLNNDLKRLPIPSVNTSNYMVSRSLSGLPLTHDKTARDLPQLSSQLNSIPYYSAPHDPSTRHHYLNVAQAQPRANSTPQLPFISSIINNSSQTPVTTTTTSTTTATSSPGKFSSSPNSSVLENNRLNSINNSNQYLPPPLLPSLQDFQLDQYQQLKQMGPTYIVKPLSHTRNNLLSTTTPTHHHIPHIPNQNIPLHQIINSSNTEVTAKTSLVSPK</sequence>